<dbReference type="EMBL" id="AL111168">
    <property type="protein sequence ID" value="CAL34440.1"/>
    <property type="molecule type" value="Genomic_DNA"/>
</dbReference>
<dbReference type="PIR" id="E81447">
    <property type="entry name" value="E81447"/>
</dbReference>
<dbReference type="RefSeq" id="WP_002858660.1">
    <property type="nucleotide sequence ID" value="NZ_SZUC01000004.1"/>
</dbReference>
<dbReference type="RefSeq" id="YP_002343728.1">
    <property type="nucleotide sequence ID" value="NC_002163.1"/>
</dbReference>
<dbReference type="SMR" id="Q9PIK9"/>
<dbReference type="IntAct" id="Q9PIK9">
    <property type="interactions" value="4"/>
</dbReference>
<dbReference type="STRING" id="192222.Cj0287c"/>
<dbReference type="PaxDb" id="192222-Cj0287c"/>
<dbReference type="EnsemblBacteria" id="CAL34440">
    <property type="protein sequence ID" value="CAL34440"/>
    <property type="gene ID" value="Cj0287c"/>
</dbReference>
<dbReference type="GeneID" id="904611"/>
<dbReference type="KEGG" id="cje:Cj0287c"/>
<dbReference type="PATRIC" id="fig|192222.6.peg.280"/>
<dbReference type="eggNOG" id="COG0782">
    <property type="taxonomic scope" value="Bacteria"/>
</dbReference>
<dbReference type="HOGENOM" id="CLU_101379_2_0_7"/>
<dbReference type="OrthoDB" id="9808774at2"/>
<dbReference type="Proteomes" id="UP000000799">
    <property type="component" value="Chromosome"/>
</dbReference>
<dbReference type="GO" id="GO:0003677">
    <property type="term" value="F:DNA binding"/>
    <property type="evidence" value="ECO:0007669"/>
    <property type="project" value="UniProtKB-UniRule"/>
</dbReference>
<dbReference type="GO" id="GO:0070063">
    <property type="term" value="F:RNA polymerase binding"/>
    <property type="evidence" value="ECO:0007669"/>
    <property type="project" value="InterPro"/>
</dbReference>
<dbReference type="GO" id="GO:0006354">
    <property type="term" value="P:DNA-templated transcription elongation"/>
    <property type="evidence" value="ECO:0007669"/>
    <property type="project" value="TreeGrafter"/>
</dbReference>
<dbReference type="GO" id="GO:0032784">
    <property type="term" value="P:regulation of DNA-templated transcription elongation"/>
    <property type="evidence" value="ECO:0007669"/>
    <property type="project" value="UniProtKB-UniRule"/>
</dbReference>
<dbReference type="FunFam" id="1.10.287.180:FF:000001">
    <property type="entry name" value="Transcription elongation factor GreA"/>
    <property type="match status" value="1"/>
</dbReference>
<dbReference type="FunFam" id="3.10.50.30:FF:000001">
    <property type="entry name" value="Transcription elongation factor GreA"/>
    <property type="match status" value="1"/>
</dbReference>
<dbReference type="Gene3D" id="3.10.50.30">
    <property type="entry name" value="Transcription elongation factor, GreA/GreB, C-terminal domain"/>
    <property type="match status" value="1"/>
</dbReference>
<dbReference type="Gene3D" id="1.10.287.180">
    <property type="entry name" value="Transcription elongation factor, GreA/GreB, N-terminal domain"/>
    <property type="match status" value="1"/>
</dbReference>
<dbReference type="HAMAP" id="MF_00105">
    <property type="entry name" value="GreA_GreB"/>
    <property type="match status" value="1"/>
</dbReference>
<dbReference type="InterPro" id="IPR036953">
    <property type="entry name" value="GreA/GreB_C_sf"/>
</dbReference>
<dbReference type="InterPro" id="IPR018151">
    <property type="entry name" value="TF_GreA/GreB_CS"/>
</dbReference>
<dbReference type="InterPro" id="IPR006359">
    <property type="entry name" value="Tscrpt_elong_fac_GreA"/>
</dbReference>
<dbReference type="InterPro" id="IPR028624">
    <property type="entry name" value="Tscrpt_elong_fac_GreA/B"/>
</dbReference>
<dbReference type="InterPro" id="IPR001437">
    <property type="entry name" value="Tscrpt_elong_fac_GreA/B_C"/>
</dbReference>
<dbReference type="InterPro" id="IPR023459">
    <property type="entry name" value="Tscrpt_elong_fac_GreA/B_fam"/>
</dbReference>
<dbReference type="InterPro" id="IPR022691">
    <property type="entry name" value="Tscrpt_elong_fac_GreA/B_N"/>
</dbReference>
<dbReference type="InterPro" id="IPR036805">
    <property type="entry name" value="Tscrpt_elong_fac_GreA/B_N_sf"/>
</dbReference>
<dbReference type="NCBIfam" id="TIGR01462">
    <property type="entry name" value="greA"/>
    <property type="match status" value="1"/>
</dbReference>
<dbReference type="NCBIfam" id="NF001261">
    <property type="entry name" value="PRK00226.1-2"/>
    <property type="match status" value="1"/>
</dbReference>
<dbReference type="NCBIfam" id="NF001263">
    <property type="entry name" value="PRK00226.1-4"/>
    <property type="match status" value="1"/>
</dbReference>
<dbReference type="PANTHER" id="PTHR30437">
    <property type="entry name" value="TRANSCRIPTION ELONGATION FACTOR GREA"/>
    <property type="match status" value="1"/>
</dbReference>
<dbReference type="PANTHER" id="PTHR30437:SF4">
    <property type="entry name" value="TRANSCRIPTION ELONGATION FACTOR GREA"/>
    <property type="match status" value="1"/>
</dbReference>
<dbReference type="Pfam" id="PF01272">
    <property type="entry name" value="GreA_GreB"/>
    <property type="match status" value="1"/>
</dbReference>
<dbReference type="Pfam" id="PF03449">
    <property type="entry name" value="GreA_GreB_N"/>
    <property type="match status" value="1"/>
</dbReference>
<dbReference type="PIRSF" id="PIRSF006092">
    <property type="entry name" value="GreA_GreB"/>
    <property type="match status" value="1"/>
</dbReference>
<dbReference type="SUPFAM" id="SSF54534">
    <property type="entry name" value="FKBP-like"/>
    <property type="match status" value="1"/>
</dbReference>
<dbReference type="SUPFAM" id="SSF46557">
    <property type="entry name" value="GreA transcript cleavage protein, N-terminal domain"/>
    <property type="match status" value="1"/>
</dbReference>
<dbReference type="PROSITE" id="PS00829">
    <property type="entry name" value="GREAB_1"/>
    <property type="match status" value="1"/>
</dbReference>
<dbReference type="PROSITE" id="PS00830">
    <property type="entry name" value="GREAB_2"/>
    <property type="match status" value="1"/>
</dbReference>
<evidence type="ECO:0000255" key="1">
    <source>
        <dbReference type="HAMAP-Rule" id="MF_00105"/>
    </source>
</evidence>
<proteinExistence type="inferred from homology"/>
<keyword id="KW-0175">Coiled coil</keyword>
<keyword id="KW-0238">DNA-binding</keyword>
<keyword id="KW-1185">Reference proteome</keyword>
<keyword id="KW-0804">Transcription</keyword>
<keyword id="KW-0805">Transcription regulation</keyword>
<feature type="chain" id="PRO_0000176915" description="Transcription elongation factor GreA">
    <location>
        <begin position="1"/>
        <end position="161"/>
    </location>
</feature>
<feature type="coiled-coil region" evidence="1">
    <location>
        <begin position="45"/>
        <end position="73"/>
    </location>
</feature>
<protein>
    <recommendedName>
        <fullName evidence="1">Transcription elongation factor GreA</fullName>
    </recommendedName>
    <alternativeName>
        <fullName evidence="1">Transcript cleavage factor GreA</fullName>
    </alternativeName>
</protein>
<accession>Q9PIK9</accession>
<accession>Q0PBL9</accession>
<organism>
    <name type="scientific">Campylobacter jejuni subsp. jejuni serotype O:2 (strain ATCC 700819 / NCTC 11168)</name>
    <dbReference type="NCBI Taxonomy" id="192222"/>
    <lineage>
        <taxon>Bacteria</taxon>
        <taxon>Pseudomonadati</taxon>
        <taxon>Campylobacterota</taxon>
        <taxon>Epsilonproteobacteria</taxon>
        <taxon>Campylobacterales</taxon>
        <taxon>Campylobacteraceae</taxon>
        <taxon>Campylobacter</taxon>
    </lineage>
</organism>
<name>GREA_CAMJE</name>
<comment type="function">
    <text evidence="1">Necessary for efficient RNA polymerase transcription elongation past template-encoded arresting sites. The arresting sites in DNA have the property of trapping a certain fraction of elongating RNA polymerases that pass through, resulting in locked ternary complexes. Cleavage of the nascent transcript by cleavage factors such as GreA or GreB allows the resumption of elongation from the new 3'terminus. GreA releases sequences of 2 to 3 nucleotides.</text>
</comment>
<comment type="similarity">
    <text evidence="1">Belongs to the GreA/GreB family.</text>
</comment>
<reference key="1">
    <citation type="journal article" date="2000" name="Nature">
        <title>The genome sequence of the food-borne pathogen Campylobacter jejuni reveals hypervariable sequences.</title>
        <authorList>
            <person name="Parkhill J."/>
            <person name="Wren B.W."/>
            <person name="Mungall K.L."/>
            <person name="Ketley J.M."/>
            <person name="Churcher C.M."/>
            <person name="Basham D."/>
            <person name="Chillingworth T."/>
            <person name="Davies R.M."/>
            <person name="Feltwell T."/>
            <person name="Holroyd S."/>
            <person name="Jagels K."/>
            <person name="Karlyshev A.V."/>
            <person name="Moule S."/>
            <person name="Pallen M.J."/>
            <person name="Penn C.W."/>
            <person name="Quail M.A."/>
            <person name="Rajandream M.A."/>
            <person name="Rutherford K.M."/>
            <person name="van Vliet A.H.M."/>
            <person name="Whitehead S."/>
            <person name="Barrell B.G."/>
        </authorList>
    </citation>
    <scope>NUCLEOTIDE SEQUENCE [LARGE SCALE GENOMIC DNA]</scope>
    <source>
        <strain>ATCC 700819 / NCTC 11168</strain>
    </source>
</reference>
<gene>
    <name evidence="1" type="primary">greA</name>
    <name type="ordered locus">Cj0287c</name>
</gene>
<sequence length="161" mass="18010">MQKEPMSQFGYDKLAAELKDLKDNQRPAVVIEIDTARSHGDLKENAEYHAAREKQALIESRIAELSDLLARAQVIDPSSYEHDSVKFGSSVVIMDLDTEKESKYTLVGICEGNLDKGYISIASPIAKAMLGKKEGDDFKVRLPKGESEFEILSINYEPLKF</sequence>